<reference key="1">
    <citation type="journal article" date="1997" name="Science">
        <title>The complete genome sequence of Escherichia coli K-12.</title>
        <authorList>
            <person name="Blattner F.R."/>
            <person name="Plunkett G. III"/>
            <person name="Bloch C.A."/>
            <person name="Perna N.T."/>
            <person name="Burland V."/>
            <person name="Riley M."/>
            <person name="Collado-Vides J."/>
            <person name="Glasner J.D."/>
            <person name="Rode C.K."/>
            <person name="Mayhew G.F."/>
            <person name="Gregor J."/>
            <person name="Davis N.W."/>
            <person name="Kirkpatrick H.A."/>
            <person name="Goeden M.A."/>
            <person name="Rose D.J."/>
            <person name="Mau B."/>
            <person name="Shao Y."/>
        </authorList>
    </citation>
    <scope>NUCLEOTIDE SEQUENCE [LARGE SCALE GENOMIC DNA]</scope>
    <source>
        <strain>K12 / MG1655 / ATCC 47076</strain>
    </source>
</reference>
<dbReference type="EMBL" id="U00096">
    <property type="protein sequence ID" value="AYC08238.1"/>
    <property type="molecule type" value="Genomic_DNA"/>
</dbReference>
<dbReference type="EnsemblBacteria" id="AYC08238">
    <property type="protein sequence ID" value="AYC08238"/>
    <property type="gene ID" value="b4610"/>
</dbReference>
<dbReference type="InParanoid" id="A0A385XJL2"/>
<dbReference type="PRO" id="PR:A0A385XJL2"/>
<dbReference type="Proteomes" id="UP000000625">
    <property type="component" value="Chromosome"/>
</dbReference>
<gene>
    <name type="primary">ygdT</name>
    <name type="ordered locus">b4610</name>
</gene>
<sequence length="48" mass="5231">MLSTESWDNCEKPPLLFPFTALTCDETPVFSGSVLNLVAHSVDKYGIG</sequence>
<feature type="chain" id="PRO_0000446259" description="Protein YgdT">
    <location>
        <begin position="1"/>
        <end position="48"/>
    </location>
</feature>
<organism>
    <name type="scientific">Escherichia coli (strain K12)</name>
    <dbReference type="NCBI Taxonomy" id="83333"/>
    <lineage>
        <taxon>Bacteria</taxon>
        <taxon>Pseudomonadati</taxon>
        <taxon>Pseudomonadota</taxon>
        <taxon>Gammaproteobacteria</taxon>
        <taxon>Enterobacterales</taxon>
        <taxon>Enterobacteriaceae</taxon>
        <taxon>Escherichia</taxon>
    </lineage>
</organism>
<protein>
    <recommendedName>
        <fullName>Protein YgdT</fullName>
    </recommendedName>
</protein>
<accession>A0A385XJL2</accession>
<proteinExistence type="predicted"/>
<keyword id="KW-1185">Reference proteome</keyword>
<name>YGDT_ECOLI</name>